<accession>Q2NGN7</accession>
<proteinExistence type="inferred from homology"/>
<dbReference type="EC" id="4.3.2.1" evidence="1"/>
<dbReference type="EMBL" id="CP000102">
    <property type="protein sequence ID" value="ABC57016.1"/>
    <property type="molecule type" value="Genomic_DNA"/>
</dbReference>
<dbReference type="RefSeq" id="WP_011406216.1">
    <property type="nucleotide sequence ID" value="NC_007681.1"/>
</dbReference>
<dbReference type="SMR" id="Q2NGN7"/>
<dbReference type="STRING" id="339860.Msp_0618"/>
<dbReference type="GeneID" id="41325194"/>
<dbReference type="KEGG" id="mst:Msp_0618"/>
<dbReference type="eggNOG" id="arCOG01748">
    <property type="taxonomic scope" value="Archaea"/>
</dbReference>
<dbReference type="HOGENOM" id="CLU_027272_2_3_2"/>
<dbReference type="OrthoDB" id="27337at2157"/>
<dbReference type="UniPathway" id="UPA00068">
    <property type="reaction ID" value="UER00114"/>
</dbReference>
<dbReference type="Proteomes" id="UP000001931">
    <property type="component" value="Chromosome"/>
</dbReference>
<dbReference type="GO" id="GO:0005829">
    <property type="term" value="C:cytosol"/>
    <property type="evidence" value="ECO:0007669"/>
    <property type="project" value="TreeGrafter"/>
</dbReference>
<dbReference type="GO" id="GO:0004056">
    <property type="term" value="F:argininosuccinate lyase activity"/>
    <property type="evidence" value="ECO:0007669"/>
    <property type="project" value="UniProtKB-UniRule"/>
</dbReference>
<dbReference type="GO" id="GO:0042450">
    <property type="term" value="P:arginine biosynthetic process via ornithine"/>
    <property type="evidence" value="ECO:0007669"/>
    <property type="project" value="InterPro"/>
</dbReference>
<dbReference type="GO" id="GO:0006526">
    <property type="term" value="P:L-arginine biosynthetic process"/>
    <property type="evidence" value="ECO:0007669"/>
    <property type="project" value="UniProtKB-UniRule"/>
</dbReference>
<dbReference type="CDD" id="cd01359">
    <property type="entry name" value="Argininosuccinate_lyase"/>
    <property type="match status" value="1"/>
</dbReference>
<dbReference type="FunFam" id="1.20.200.10:FF:000015">
    <property type="entry name" value="argininosuccinate lyase isoform X2"/>
    <property type="match status" value="1"/>
</dbReference>
<dbReference type="Gene3D" id="1.10.40.30">
    <property type="entry name" value="Fumarase/aspartase (C-terminal domain)"/>
    <property type="match status" value="1"/>
</dbReference>
<dbReference type="Gene3D" id="1.20.200.10">
    <property type="entry name" value="Fumarase/aspartase (Central domain)"/>
    <property type="match status" value="1"/>
</dbReference>
<dbReference type="Gene3D" id="1.10.275.10">
    <property type="entry name" value="Fumarase/aspartase (N-terminal domain)"/>
    <property type="match status" value="1"/>
</dbReference>
<dbReference type="HAMAP" id="MF_00006">
    <property type="entry name" value="Arg_succ_lyase"/>
    <property type="match status" value="1"/>
</dbReference>
<dbReference type="InterPro" id="IPR029419">
    <property type="entry name" value="Arg_succ_lyase_C"/>
</dbReference>
<dbReference type="InterPro" id="IPR009049">
    <property type="entry name" value="Argininosuccinate_lyase"/>
</dbReference>
<dbReference type="InterPro" id="IPR024083">
    <property type="entry name" value="Fumarase/histidase_N"/>
</dbReference>
<dbReference type="InterPro" id="IPR000362">
    <property type="entry name" value="Fumarate_lyase_fam"/>
</dbReference>
<dbReference type="InterPro" id="IPR022761">
    <property type="entry name" value="Fumarate_lyase_N"/>
</dbReference>
<dbReference type="InterPro" id="IPR008948">
    <property type="entry name" value="L-Aspartase-like"/>
</dbReference>
<dbReference type="NCBIfam" id="TIGR00838">
    <property type="entry name" value="argH"/>
    <property type="match status" value="1"/>
</dbReference>
<dbReference type="PANTHER" id="PTHR43814">
    <property type="entry name" value="ARGININOSUCCINATE LYASE"/>
    <property type="match status" value="1"/>
</dbReference>
<dbReference type="PANTHER" id="PTHR43814:SF1">
    <property type="entry name" value="ARGININOSUCCINATE LYASE"/>
    <property type="match status" value="1"/>
</dbReference>
<dbReference type="Pfam" id="PF14698">
    <property type="entry name" value="ASL_C2"/>
    <property type="match status" value="1"/>
</dbReference>
<dbReference type="Pfam" id="PF00206">
    <property type="entry name" value="Lyase_1"/>
    <property type="match status" value="1"/>
</dbReference>
<dbReference type="PRINTS" id="PR00145">
    <property type="entry name" value="ARGSUCLYASE"/>
</dbReference>
<dbReference type="PRINTS" id="PR00149">
    <property type="entry name" value="FUMRATELYASE"/>
</dbReference>
<dbReference type="SUPFAM" id="SSF48557">
    <property type="entry name" value="L-aspartase-like"/>
    <property type="match status" value="1"/>
</dbReference>
<comment type="catalytic activity">
    <reaction evidence="1">
        <text>2-(N(omega)-L-arginino)succinate = fumarate + L-arginine</text>
        <dbReference type="Rhea" id="RHEA:24020"/>
        <dbReference type="ChEBI" id="CHEBI:29806"/>
        <dbReference type="ChEBI" id="CHEBI:32682"/>
        <dbReference type="ChEBI" id="CHEBI:57472"/>
        <dbReference type="EC" id="4.3.2.1"/>
    </reaction>
</comment>
<comment type="pathway">
    <text evidence="1">Amino-acid biosynthesis; L-arginine biosynthesis; L-arginine from L-ornithine and carbamoyl phosphate: step 3/3.</text>
</comment>
<comment type="subcellular location">
    <subcellularLocation>
        <location evidence="1">Cytoplasm</location>
    </subcellularLocation>
</comment>
<comment type="similarity">
    <text evidence="1">Belongs to the lyase 1 family. Argininosuccinate lyase subfamily.</text>
</comment>
<keyword id="KW-0028">Amino-acid biosynthesis</keyword>
<keyword id="KW-0055">Arginine biosynthesis</keyword>
<keyword id="KW-0963">Cytoplasm</keyword>
<keyword id="KW-0456">Lyase</keyword>
<keyword id="KW-1185">Reference proteome</keyword>
<organism>
    <name type="scientific">Methanosphaera stadtmanae (strain ATCC 43021 / DSM 3091 / JCM 11832 / MCB-3)</name>
    <dbReference type="NCBI Taxonomy" id="339860"/>
    <lineage>
        <taxon>Archaea</taxon>
        <taxon>Methanobacteriati</taxon>
        <taxon>Methanobacteriota</taxon>
        <taxon>Methanomada group</taxon>
        <taxon>Methanobacteria</taxon>
        <taxon>Methanobacteriales</taxon>
        <taxon>Methanobacteriaceae</taxon>
        <taxon>Methanosphaera</taxon>
    </lineage>
</organism>
<evidence type="ECO:0000255" key="1">
    <source>
        <dbReference type="HAMAP-Rule" id="MF_00006"/>
    </source>
</evidence>
<protein>
    <recommendedName>
        <fullName evidence="1">Argininosuccinate lyase</fullName>
        <shortName evidence="1">ASAL</shortName>
        <ecNumber evidence="1">4.3.2.1</ecNumber>
    </recommendedName>
    <alternativeName>
        <fullName evidence="1">Arginosuccinase</fullName>
    </alternativeName>
</protein>
<reference key="1">
    <citation type="journal article" date="2006" name="J. Bacteriol.">
        <title>The genome sequence of Methanosphaera stadtmanae reveals why this human intestinal archaeon is restricted to methanol and H2 for methane formation and ATP synthesis.</title>
        <authorList>
            <person name="Fricke W.F."/>
            <person name="Seedorf H."/>
            <person name="Henne A."/>
            <person name="Kruer M."/>
            <person name="Liesegang H."/>
            <person name="Hedderich R."/>
            <person name="Gottschalk G."/>
            <person name="Thauer R.K."/>
        </authorList>
    </citation>
    <scope>NUCLEOTIDE SEQUENCE [LARGE SCALE GENOMIC DNA]</scope>
    <source>
        <strain>ATCC 43021 / DSM 3091 / JCM 11832 / MCB-3</strain>
    </source>
</reference>
<gene>
    <name evidence="1" type="primary">argH</name>
    <name type="ordered locus">Msp_0618</name>
</gene>
<sequence length="465" mass="52209">MDLRAGRFDGQMTDDAAQFSSSIEFDKRIFKSDIKCNRAHTTMLIEEGIIPKESGKKILKALDKLEKEGIGALNLDPSFEDIHMALEDYVTKEIGDEAGFMHTAKSRNDQVCTDIRLTLKEEIENTISNIKSFIKTIVEMAKENTHTLFIAYTHLQHAQPTTFAHHLMAYANELRRDCERLIDTYKRVDMNPLGSAALTTTGFPINRERTTELLGFSKVMDNSIDGVSSRDFAAEAIFDYAMLSTTLGKISDEIVIWSSYEFRMVECSNQYSSTSSIMPQKKNPDIAELSRGKSTIAYGELMTVLSMIKGIPHSYNRDLQEVTPHLWNAIDNTNDILRIVHGMLSTLTINKDRTEELAGANFATATELADVMVREKNLPFRTAHRIVGRVVSEAIDDNITTHDIDNDYVNRVSVEVMGKPINLGEDLVKQALNPLRNVKSRTVIGGCAPEAVNDAIEKMEIFLNE</sequence>
<feature type="chain" id="PRO_0000240791" description="Argininosuccinate lyase">
    <location>
        <begin position="1"/>
        <end position="465"/>
    </location>
</feature>
<name>ARLY_METST</name>